<sequence length="856" mass="95701">MTLSAQQLQQHTPMMQQFLTIKSEVPDTLLFYRMGDFYELFFDDARKASQLLGISLTQRGKTGGNAIPMAGVPYHSVEGYLAKLIAMGESIAICEQIGDPATSKGPVERKLVRIITPGTVTDEALLNDRQDNLLCSVYQLQNSFGIASLDLGSGRFIINQFQHTETLQAELQRLNPAELLYPENFEHMDLIEHLQTIRRRPEWEFELATSKKILNQQFSTKDLIGFGVEKAEVALCAAGALLQYIKDTQRTSLPHLQSIQLEKNIDSVILDAATRKNLELTQNLSGGFDNTLAEVLDFTVTPMGSRLLKRWIHQPIRNFNTLTYRQTMIQTLIEQDLSSALADPLKQIGDVERVIARLALRSARPRDLTRLRTAFSLLPELQHLIADLPTELVGKLNKEMGLYPELLTLLEKAVIDNPPVIIRDGGVIKEGYNEELDQWRNLAKGATDYLEQLETRERQATGISTLKVGYNRVHGYYIETSRSQSDIVPAHYIRRQTLKNTERYIIAELKEHEDKVLSSRGKALALEKKLYEQLIDLLLPHLQNLQSTAQALAELDVLNNLAERAVTLNYVRPTLQAENGIEIEEGRHPVVEQVSKTPFIANPVMLNDKRRMLIITGPNMGGKSTYMRQVALMVLMAHIGSFIPAQQAKIGPVDRIFTRIGASDDLASGRSTFMVEMTETANILHNATKNSLVLMDEIGRGTSTFDGLSLAWACAEQLAKKIQAYTLFATHYFELTKLPENIPELVNVHLDAVEHGDAIAFLHAVQEGAANKSYGLQVAALAGVPKEVVSNAKNILRQLELGSQPQANLNEKPLQTTLAFDDAQTNQALLLLANINPDELTPKKALELIYLLKERA</sequence>
<dbReference type="EMBL" id="CP000510">
    <property type="protein sequence ID" value="ABM05069.1"/>
    <property type="molecule type" value="Genomic_DNA"/>
</dbReference>
<dbReference type="RefSeq" id="WP_011771621.1">
    <property type="nucleotide sequence ID" value="NC_008709.1"/>
</dbReference>
<dbReference type="SMR" id="A1T004"/>
<dbReference type="STRING" id="357804.Ping_3383"/>
<dbReference type="KEGG" id="pin:Ping_3383"/>
<dbReference type="eggNOG" id="COG0249">
    <property type="taxonomic scope" value="Bacteria"/>
</dbReference>
<dbReference type="HOGENOM" id="CLU_002472_4_0_6"/>
<dbReference type="OrthoDB" id="9802448at2"/>
<dbReference type="Proteomes" id="UP000000639">
    <property type="component" value="Chromosome"/>
</dbReference>
<dbReference type="GO" id="GO:0005829">
    <property type="term" value="C:cytosol"/>
    <property type="evidence" value="ECO:0007669"/>
    <property type="project" value="TreeGrafter"/>
</dbReference>
<dbReference type="GO" id="GO:0005524">
    <property type="term" value="F:ATP binding"/>
    <property type="evidence" value="ECO:0007669"/>
    <property type="project" value="UniProtKB-UniRule"/>
</dbReference>
<dbReference type="GO" id="GO:0140664">
    <property type="term" value="F:ATP-dependent DNA damage sensor activity"/>
    <property type="evidence" value="ECO:0007669"/>
    <property type="project" value="InterPro"/>
</dbReference>
<dbReference type="GO" id="GO:0003684">
    <property type="term" value="F:damaged DNA binding"/>
    <property type="evidence" value="ECO:0007669"/>
    <property type="project" value="UniProtKB-UniRule"/>
</dbReference>
<dbReference type="GO" id="GO:0030983">
    <property type="term" value="F:mismatched DNA binding"/>
    <property type="evidence" value="ECO:0007669"/>
    <property type="project" value="InterPro"/>
</dbReference>
<dbReference type="GO" id="GO:0006298">
    <property type="term" value="P:mismatch repair"/>
    <property type="evidence" value="ECO:0007669"/>
    <property type="project" value="UniProtKB-UniRule"/>
</dbReference>
<dbReference type="CDD" id="cd03284">
    <property type="entry name" value="ABC_MutS1"/>
    <property type="match status" value="1"/>
</dbReference>
<dbReference type="FunFam" id="1.10.1420.10:FF:000002">
    <property type="entry name" value="DNA mismatch repair protein MutS"/>
    <property type="match status" value="1"/>
</dbReference>
<dbReference type="FunFam" id="3.40.1170.10:FF:000001">
    <property type="entry name" value="DNA mismatch repair protein MutS"/>
    <property type="match status" value="1"/>
</dbReference>
<dbReference type="FunFam" id="3.40.50.300:FF:000283">
    <property type="entry name" value="DNA mismatch repair protein MutS"/>
    <property type="match status" value="1"/>
</dbReference>
<dbReference type="Gene3D" id="1.10.1420.10">
    <property type="match status" value="2"/>
</dbReference>
<dbReference type="Gene3D" id="6.10.140.430">
    <property type="match status" value="1"/>
</dbReference>
<dbReference type="Gene3D" id="3.40.1170.10">
    <property type="entry name" value="DNA repair protein MutS, domain I"/>
    <property type="match status" value="1"/>
</dbReference>
<dbReference type="Gene3D" id="3.30.420.110">
    <property type="entry name" value="MutS, connector domain"/>
    <property type="match status" value="1"/>
</dbReference>
<dbReference type="Gene3D" id="3.40.50.300">
    <property type="entry name" value="P-loop containing nucleotide triphosphate hydrolases"/>
    <property type="match status" value="1"/>
</dbReference>
<dbReference type="HAMAP" id="MF_00096">
    <property type="entry name" value="MutS"/>
    <property type="match status" value="1"/>
</dbReference>
<dbReference type="InterPro" id="IPR005748">
    <property type="entry name" value="DNA_mismatch_repair_MutS"/>
</dbReference>
<dbReference type="InterPro" id="IPR007695">
    <property type="entry name" value="DNA_mismatch_repair_MutS-lik_N"/>
</dbReference>
<dbReference type="InterPro" id="IPR017261">
    <property type="entry name" value="DNA_mismatch_repair_MutS/MSH"/>
</dbReference>
<dbReference type="InterPro" id="IPR000432">
    <property type="entry name" value="DNA_mismatch_repair_MutS_C"/>
</dbReference>
<dbReference type="InterPro" id="IPR007861">
    <property type="entry name" value="DNA_mismatch_repair_MutS_clamp"/>
</dbReference>
<dbReference type="InterPro" id="IPR007696">
    <property type="entry name" value="DNA_mismatch_repair_MutS_core"/>
</dbReference>
<dbReference type="InterPro" id="IPR016151">
    <property type="entry name" value="DNA_mismatch_repair_MutS_N"/>
</dbReference>
<dbReference type="InterPro" id="IPR036187">
    <property type="entry name" value="DNA_mismatch_repair_MutS_sf"/>
</dbReference>
<dbReference type="InterPro" id="IPR007860">
    <property type="entry name" value="DNA_mmatch_repair_MutS_con_dom"/>
</dbReference>
<dbReference type="InterPro" id="IPR045076">
    <property type="entry name" value="MutS"/>
</dbReference>
<dbReference type="InterPro" id="IPR036678">
    <property type="entry name" value="MutS_con_dom_sf"/>
</dbReference>
<dbReference type="InterPro" id="IPR027417">
    <property type="entry name" value="P-loop_NTPase"/>
</dbReference>
<dbReference type="NCBIfam" id="TIGR01070">
    <property type="entry name" value="mutS1"/>
    <property type="match status" value="1"/>
</dbReference>
<dbReference type="NCBIfam" id="NF003810">
    <property type="entry name" value="PRK05399.1"/>
    <property type="match status" value="1"/>
</dbReference>
<dbReference type="PANTHER" id="PTHR11361:SF34">
    <property type="entry name" value="DNA MISMATCH REPAIR PROTEIN MSH1, MITOCHONDRIAL"/>
    <property type="match status" value="1"/>
</dbReference>
<dbReference type="PANTHER" id="PTHR11361">
    <property type="entry name" value="DNA MISMATCH REPAIR PROTEIN MUTS FAMILY MEMBER"/>
    <property type="match status" value="1"/>
</dbReference>
<dbReference type="Pfam" id="PF01624">
    <property type="entry name" value="MutS_I"/>
    <property type="match status" value="1"/>
</dbReference>
<dbReference type="Pfam" id="PF05188">
    <property type="entry name" value="MutS_II"/>
    <property type="match status" value="1"/>
</dbReference>
<dbReference type="Pfam" id="PF05192">
    <property type="entry name" value="MutS_III"/>
    <property type="match status" value="1"/>
</dbReference>
<dbReference type="Pfam" id="PF05190">
    <property type="entry name" value="MutS_IV"/>
    <property type="match status" value="1"/>
</dbReference>
<dbReference type="Pfam" id="PF00488">
    <property type="entry name" value="MutS_V"/>
    <property type="match status" value="1"/>
</dbReference>
<dbReference type="PIRSF" id="PIRSF037677">
    <property type="entry name" value="DNA_mis_repair_Msh6"/>
    <property type="match status" value="1"/>
</dbReference>
<dbReference type="SMART" id="SM00534">
    <property type="entry name" value="MUTSac"/>
    <property type="match status" value="1"/>
</dbReference>
<dbReference type="SMART" id="SM00533">
    <property type="entry name" value="MUTSd"/>
    <property type="match status" value="1"/>
</dbReference>
<dbReference type="SUPFAM" id="SSF55271">
    <property type="entry name" value="DNA repair protein MutS, domain I"/>
    <property type="match status" value="1"/>
</dbReference>
<dbReference type="SUPFAM" id="SSF53150">
    <property type="entry name" value="DNA repair protein MutS, domain II"/>
    <property type="match status" value="1"/>
</dbReference>
<dbReference type="SUPFAM" id="SSF48334">
    <property type="entry name" value="DNA repair protein MutS, domain III"/>
    <property type="match status" value="1"/>
</dbReference>
<dbReference type="SUPFAM" id="SSF52540">
    <property type="entry name" value="P-loop containing nucleoside triphosphate hydrolases"/>
    <property type="match status" value="1"/>
</dbReference>
<dbReference type="PROSITE" id="PS00486">
    <property type="entry name" value="DNA_MISMATCH_REPAIR_2"/>
    <property type="match status" value="1"/>
</dbReference>
<protein>
    <recommendedName>
        <fullName evidence="1">DNA mismatch repair protein MutS</fullName>
    </recommendedName>
</protein>
<feature type="chain" id="PRO_0000335207" description="DNA mismatch repair protein MutS">
    <location>
        <begin position="1"/>
        <end position="856"/>
    </location>
</feature>
<feature type="binding site" evidence="1">
    <location>
        <begin position="617"/>
        <end position="624"/>
    </location>
    <ligand>
        <name>ATP</name>
        <dbReference type="ChEBI" id="CHEBI:30616"/>
    </ligand>
</feature>
<organism>
    <name type="scientific">Psychromonas ingrahamii (strain DSM 17664 / CCUG 51855 / 37)</name>
    <dbReference type="NCBI Taxonomy" id="357804"/>
    <lineage>
        <taxon>Bacteria</taxon>
        <taxon>Pseudomonadati</taxon>
        <taxon>Pseudomonadota</taxon>
        <taxon>Gammaproteobacteria</taxon>
        <taxon>Alteromonadales</taxon>
        <taxon>Psychromonadaceae</taxon>
        <taxon>Psychromonas</taxon>
    </lineage>
</organism>
<accession>A1T004</accession>
<gene>
    <name evidence="1" type="primary">mutS</name>
    <name type="ordered locus">Ping_3383</name>
</gene>
<keyword id="KW-0067">ATP-binding</keyword>
<keyword id="KW-0227">DNA damage</keyword>
<keyword id="KW-0234">DNA repair</keyword>
<keyword id="KW-0238">DNA-binding</keyword>
<keyword id="KW-0547">Nucleotide-binding</keyword>
<keyword id="KW-1185">Reference proteome</keyword>
<comment type="function">
    <text evidence="1">This protein is involved in the repair of mismatches in DNA. It is possible that it carries out the mismatch recognition step. This protein has a weak ATPase activity.</text>
</comment>
<comment type="similarity">
    <text evidence="1">Belongs to the DNA mismatch repair MutS family.</text>
</comment>
<proteinExistence type="inferred from homology"/>
<reference key="1">
    <citation type="journal article" date="2008" name="BMC Genomics">
        <title>Genomics of an extreme psychrophile, Psychromonas ingrahamii.</title>
        <authorList>
            <person name="Riley M."/>
            <person name="Staley J.T."/>
            <person name="Danchin A."/>
            <person name="Wang T.Z."/>
            <person name="Brettin T.S."/>
            <person name="Hauser L.J."/>
            <person name="Land M.L."/>
            <person name="Thompson L.S."/>
        </authorList>
    </citation>
    <scope>NUCLEOTIDE SEQUENCE [LARGE SCALE GENOMIC DNA]</scope>
    <source>
        <strain>DSM 17664 / CCUG 51855 / 37</strain>
    </source>
</reference>
<name>MUTS_PSYIN</name>
<evidence type="ECO:0000255" key="1">
    <source>
        <dbReference type="HAMAP-Rule" id="MF_00096"/>
    </source>
</evidence>